<sequence>MGYELFGLPMIYYISMVAKVLVVFVFVLLTVAYATYAERKIIGHMQVRLGPMRTGWHGLLQPIADGLKLFFKEEIVPSQADKFAFLIAPIIALVPAFIGFAVIPFGETIEVAGYKIPLQIAGYYDTVSGQVVDMNVGVLYILALASIGVYGIVLAGWSSNSKYSLLGGLRSSAQMISYELAAGLAIISVFMLSESLSLQKIVADQANGAWYCFKQPLAFILFFICSLAEINRTPFDLPEAETELVSGFCTEYSSMKYAMFFMAEYANMVTVCAVTTTLFLGGWHGPAFLPGWAWFIAKVYFLIFVCMWIRATYPRYRYDQLMRLGWKVFLPLTLVNIIVTGIVVSLQS</sequence>
<gene>
    <name evidence="1" type="primary">nuoH1</name>
    <name type="ordered locus">GSU0345</name>
</gene>
<organism>
    <name type="scientific">Geobacter sulfurreducens (strain ATCC 51573 / DSM 12127 / PCA)</name>
    <dbReference type="NCBI Taxonomy" id="243231"/>
    <lineage>
        <taxon>Bacteria</taxon>
        <taxon>Pseudomonadati</taxon>
        <taxon>Thermodesulfobacteriota</taxon>
        <taxon>Desulfuromonadia</taxon>
        <taxon>Geobacterales</taxon>
        <taxon>Geobacteraceae</taxon>
        <taxon>Geobacter</taxon>
    </lineage>
</organism>
<feature type="chain" id="PRO_0000240076" description="NADH-quinone oxidoreductase subunit H 1">
    <location>
        <begin position="1"/>
        <end position="348"/>
    </location>
</feature>
<feature type="transmembrane region" description="Helical" evidence="1">
    <location>
        <begin position="11"/>
        <end position="31"/>
    </location>
</feature>
<feature type="transmembrane region" description="Helical" evidence="1">
    <location>
        <begin position="83"/>
        <end position="103"/>
    </location>
</feature>
<feature type="transmembrane region" description="Helical" evidence="1">
    <location>
        <begin position="136"/>
        <end position="156"/>
    </location>
</feature>
<feature type="transmembrane region" description="Helical" evidence="1">
    <location>
        <begin position="172"/>
        <end position="192"/>
    </location>
</feature>
<feature type="transmembrane region" description="Helical" evidence="1">
    <location>
        <begin position="208"/>
        <end position="228"/>
    </location>
</feature>
<feature type="transmembrane region" description="Helical" evidence="1">
    <location>
        <begin position="268"/>
        <end position="288"/>
    </location>
</feature>
<feature type="transmembrane region" description="Helical" evidence="1">
    <location>
        <begin position="289"/>
        <end position="309"/>
    </location>
</feature>
<feature type="transmembrane region" description="Helical" evidence="1">
    <location>
        <begin position="324"/>
        <end position="344"/>
    </location>
</feature>
<dbReference type="EC" id="7.1.1.-" evidence="1"/>
<dbReference type="EMBL" id="AE017180">
    <property type="protein sequence ID" value="AAR33678.1"/>
    <property type="molecule type" value="Genomic_DNA"/>
</dbReference>
<dbReference type="RefSeq" id="NP_951405.1">
    <property type="nucleotide sequence ID" value="NC_002939.5"/>
</dbReference>
<dbReference type="SMR" id="Q74GA1"/>
<dbReference type="STRING" id="243231.GSU0345"/>
<dbReference type="EnsemblBacteria" id="AAR33678">
    <property type="protein sequence ID" value="AAR33678"/>
    <property type="gene ID" value="GSU0345"/>
</dbReference>
<dbReference type="KEGG" id="gsu:GSU0345"/>
<dbReference type="PATRIC" id="fig|243231.5.peg.342"/>
<dbReference type="eggNOG" id="COG1005">
    <property type="taxonomic scope" value="Bacteria"/>
</dbReference>
<dbReference type="HOGENOM" id="CLU_015134_0_1_7"/>
<dbReference type="InParanoid" id="Q74GA1"/>
<dbReference type="OrthoDB" id="9803734at2"/>
<dbReference type="Proteomes" id="UP000000577">
    <property type="component" value="Chromosome"/>
</dbReference>
<dbReference type="GO" id="GO:0005886">
    <property type="term" value="C:plasma membrane"/>
    <property type="evidence" value="ECO:0007669"/>
    <property type="project" value="UniProtKB-SubCell"/>
</dbReference>
<dbReference type="GO" id="GO:0045271">
    <property type="term" value="C:respiratory chain complex I"/>
    <property type="evidence" value="ECO:0000318"/>
    <property type="project" value="GO_Central"/>
</dbReference>
<dbReference type="GO" id="GO:0016655">
    <property type="term" value="F:oxidoreductase activity, acting on NAD(P)H, quinone or similar compound as acceptor"/>
    <property type="evidence" value="ECO:0007669"/>
    <property type="project" value="UniProtKB-UniRule"/>
</dbReference>
<dbReference type="GO" id="GO:0048038">
    <property type="term" value="F:quinone binding"/>
    <property type="evidence" value="ECO:0007669"/>
    <property type="project" value="UniProtKB-KW"/>
</dbReference>
<dbReference type="GO" id="GO:0009060">
    <property type="term" value="P:aerobic respiration"/>
    <property type="evidence" value="ECO:0000318"/>
    <property type="project" value="GO_Central"/>
</dbReference>
<dbReference type="HAMAP" id="MF_01350">
    <property type="entry name" value="NDH1_NuoH"/>
    <property type="match status" value="1"/>
</dbReference>
<dbReference type="InterPro" id="IPR001694">
    <property type="entry name" value="NADH_UbQ_OxRdtase_su1/FPO"/>
</dbReference>
<dbReference type="InterPro" id="IPR018086">
    <property type="entry name" value="NADH_UbQ_OxRdtase_su1_CS"/>
</dbReference>
<dbReference type="NCBIfam" id="NF004741">
    <property type="entry name" value="PRK06076.1-2"/>
    <property type="match status" value="1"/>
</dbReference>
<dbReference type="PANTHER" id="PTHR11432">
    <property type="entry name" value="NADH DEHYDROGENASE SUBUNIT 1"/>
    <property type="match status" value="1"/>
</dbReference>
<dbReference type="PANTHER" id="PTHR11432:SF3">
    <property type="entry name" value="NADH-UBIQUINONE OXIDOREDUCTASE CHAIN 1"/>
    <property type="match status" value="1"/>
</dbReference>
<dbReference type="Pfam" id="PF00146">
    <property type="entry name" value="NADHdh"/>
    <property type="match status" value="1"/>
</dbReference>
<dbReference type="PROSITE" id="PS00667">
    <property type="entry name" value="COMPLEX1_ND1_1"/>
    <property type="match status" value="1"/>
</dbReference>
<dbReference type="PROSITE" id="PS00668">
    <property type="entry name" value="COMPLEX1_ND1_2"/>
    <property type="match status" value="1"/>
</dbReference>
<name>NUOH1_GEOSL</name>
<evidence type="ECO:0000255" key="1">
    <source>
        <dbReference type="HAMAP-Rule" id="MF_01350"/>
    </source>
</evidence>
<keyword id="KW-0997">Cell inner membrane</keyword>
<keyword id="KW-1003">Cell membrane</keyword>
<keyword id="KW-0472">Membrane</keyword>
<keyword id="KW-0520">NAD</keyword>
<keyword id="KW-0874">Quinone</keyword>
<keyword id="KW-1185">Reference proteome</keyword>
<keyword id="KW-1278">Translocase</keyword>
<keyword id="KW-0812">Transmembrane</keyword>
<keyword id="KW-1133">Transmembrane helix</keyword>
<keyword id="KW-0830">Ubiquinone</keyword>
<reference key="1">
    <citation type="journal article" date="2003" name="Science">
        <title>Genome of Geobacter sulfurreducens: metal reduction in subsurface environments.</title>
        <authorList>
            <person name="Methe B.A."/>
            <person name="Nelson K.E."/>
            <person name="Eisen J.A."/>
            <person name="Paulsen I.T."/>
            <person name="Nelson W.C."/>
            <person name="Heidelberg J.F."/>
            <person name="Wu D."/>
            <person name="Wu M."/>
            <person name="Ward N.L."/>
            <person name="Beanan M.J."/>
            <person name="Dodson R.J."/>
            <person name="Madupu R."/>
            <person name="Brinkac L.M."/>
            <person name="Daugherty S.C."/>
            <person name="DeBoy R.T."/>
            <person name="Durkin A.S."/>
            <person name="Gwinn M.L."/>
            <person name="Kolonay J.F."/>
            <person name="Sullivan S.A."/>
            <person name="Haft D.H."/>
            <person name="Selengut J."/>
            <person name="Davidsen T.M."/>
            <person name="Zafar N."/>
            <person name="White O."/>
            <person name="Tran B."/>
            <person name="Romero C."/>
            <person name="Forberger H.A."/>
            <person name="Weidman J.F."/>
            <person name="Khouri H.M."/>
            <person name="Feldblyum T.V."/>
            <person name="Utterback T.R."/>
            <person name="Van Aken S.E."/>
            <person name="Lovley D.R."/>
            <person name="Fraser C.M."/>
        </authorList>
    </citation>
    <scope>NUCLEOTIDE SEQUENCE [LARGE SCALE GENOMIC DNA]</scope>
    <source>
        <strain>ATCC 51573 / DSM 12127 / PCA</strain>
    </source>
</reference>
<protein>
    <recommendedName>
        <fullName evidence="1">NADH-quinone oxidoreductase subunit H 1</fullName>
        <ecNumber evidence="1">7.1.1.-</ecNumber>
    </recommendedName>
    <alternativeName>
        <fullName evidence="1">NADH dehydrogenase I subunit H 1</fullName>
    </alternativeName>
    <alternativeName>
        <fullName evidence="1">NDH-1 subunit H 1</fullName>
    </alternativeName>
</protein>
<comment type="function">
    <text evidence="1">NDH-1 shuttles electrons from NADH, via FMN and iron-sulfur (Fe-S) centers, to quinones in the respiratory chain. The immediate electron acceptor for the enzyme in this species is believed to be ubiquinone. Couples the redox reaction to proton translocation (for every two electrons transferred, four hydrogen ions are translocated across the cytoplasmic membrane), and thus conserves the redox energy in a proton gradient. This subunit may bind ubiquinone.</text>
</comment>
<comment type="catalytic activity">
    <reaction evidence="1">
        <text>a quinone + NADH + 5 H(+)(in) = a quinol + NAD(+) + 4 H(+)(out)</text>
        <dbReference type="Rhea" id="RHEA:57888"/>
        <dbReference type="ChEBI" id="CHEBI:15378"/>
        <dbReference type="ChEBI" id="CHEBI:24646"/>
        <dbReference type="ChEBI" id="CHEBI:57540"/>
        <dbReference type="ChEBI" id="CHEBI:57945"/>
        <dbReference type="ChEBI" id="CHEBI:132124"/>
    </reaction>
</comment>
<comment type="subunit">
    <text evidence="1">NDH-1 is composed of 14 different subunits. Subunits NuoA, H, J, K, L, M, N constitute the membrane sector of the complex.</text>
</comment>
<comment type="subcellular location">
    <subcellularLocation>
        <location evidence="1">Cell inner membrane</location>
        <topology evidence="1">Multi-pass membrane protein</topology>
    </subcellularLocation>
</comment>
<comment type="similarity">
    <text evidence="1">Belongs to the complex I subunit 1 family.</text>
</comment>
<accession>Q74GA1</accession>
<proteinExistence type="inferred from homology"/>